<comment type="catalytic activity">
    <reaction>
        <text>(S)-malate + a quinone = a quinol + oxaloacetate</text>
        <dbReference type="Rhea" id="RHEA:46012"/>
        <dbReference type="ChEBI" id="CHEBI:15589"/>
        <dbReference type="ChEBI" id="CHEBI:16452"/>
        <dbReference type="ChEBI" id="CHEBI:24646"/>
        <dbReference type="ChEBI" id="CHEBI:132124"/>
        <dbReference type="EC" id="1.1.5.4"/>
    </reaction>
</comment>
<comment type="cofactor">
    <cofactor evidence="1">
        <name>FAD</name>
        <dbReference type="ChEBI" id="CHEBI:57692"/>
    </cofactor>
</comment>
<comment type="pathway">
    <text>Carbohydrate metabolism; tricarboxylic acid cycle; oxaloacetate from (S)-malate (quinone route): step 1/1.</text>
</comment>
<comment type="similarity">
    <text evidence="2">Belongs to the MQO family.</text>
</comment>
<sequence length="493" mass="53595">MSDLARTDVVLIGAGIMSATLGVLLRRLEPNWSITLIERLDAVAAESSGPWNNAGTGHSALCEMNYTPEMPDGSIDITKAVRVNEQFQVTRQFWAYAAENGILTDVRSFLNPVPHVSFVHGSRGVEYLRRRQKALAGNPLFAGTEFIESPDEFARRLPFMAAKRAFSEPVALNWAADGTDVDFGALAKQLIGYCVQNGTTALFGHEVRNLSRQSDGSWTVTMCNRRTGEKRKLNTKFVFVGAGGDTLPVLQKSGIKEVKGFAGFPIGGRFLRAGNPALTASHRAKVYGFPAPGAPPLGALHLDLRFVNGKSWLVFGPYAGWSPKFLKHGQISDLPRSIRPDNLLSVLGVGLTERRLLNYLISQLRLSEPERVSALREFAPSAIDSDWELTIAGQRVQVIRRDERNGGVLEFGTTVIGDADGSIAGLLGGSPGASTAVAIMLDVLQKCFANRYQSWLPTLKEMVPSLGVQLSNEPALFDEVWSWSTKALKLGAA</sequence>
<keyword id="KW-0274">FAD</keyword>
<keyword id="KW-0285">Flavoprotein</keyword>
<keyword id="KW-0560">Oxidoreductase</keyword>
<keyword id="KW-1185">Reference proteome</keyword>
<keyword id="KW-0816">Tricarboxylic acid cycle</keyword>
<reference key="1">
    <citation type="journal article" date="2003" name="Proc. Natl. Acad. Sci. U.S.A.">
        <title>The complete genome sequence of Mycobacterium bovis.</title>
        <authorList>
            <person name="Garnier T."/>
            <person name="Eiglmeier K."/>
            <person name="Camus J.-C."/>
            <person name="Medina N."/>
            <person name="Mansoor H."/>
            <person name="Pryor M."/>
            <person name="Duthoy S."/>
            <person name="Grondin S."/>
            <person name="Lacroix C."/>
            <person name="Monsempe C."/>
            <person name="Simon S."/>
            <person name="Harris B."/>
            <person name="Atkin R."/>
            <person name="Doggett J."/>
            <person name="Mayes R."/>
            <person name="Keating L."/>
            <person name="Wheeler P.R."/>
            <person name="Parkhill J."/>
            <person name="Barrell B.G."/>
            <person name="Cole S.T."/>
            <person name="Gordon S.V."/>
            <person name="Hewinson R.G."/>
        </authorList>
    </citation>
    <scope>NUCLEOTIDE SEQUENCE [LARGE SCALE GENOMIC DNA]</scope>
    <source>
        <strain>ATCC BAA-935 / AF2122/97</strain>
    </source>
</reference>
<reference key="2">
    <citation type="journal article" date="2017" name="Genome Announc.">
        <title>Updated reference genome sequence and annotation of Mycobacterium bovis AF2122/97.</title>
        <authorList>
            <person name="Malone K.M."/>
            <person name="Farrell D."/>
            <person name="Stuber T.P."/>
            <person name="Schubert O.T."/>
            <person name="Aebersold R."/>
            <person name="Robbe-Austerman S."/>
            <person name="Gordon S.V."/>
        </authorList>
    </citation>
    <scope>NUCLEOTIDE SEQUENCE [LARGE SCALE GENOMIC DNA]</scope>
    <scope>GENOME REANNOTATION</scope>
    <source>
        <strain>ATCC BAA-935 / AF2122/97</strain>
    </source>
</reference>
<organism>
    <name type="scientific">Mycobacterium bovis (strain ATCC BAA-935 / AF2122/97)</name>
    <dbReference type="NCBI Taxonomy" id="233413"/>
    <lineage>
        <taxon>Bacteria</taxon>
        <taxon>Bacillati</taxon>
        <taxon>Actinomycetota</taxon>
        <taxon>Actinomycetes</taxon>
        <taxon>Mycobacteriales</taxon>
        <taxon>Mycobacteriaceae</taxon>
        <taxon>Mycobacterium</taxon>
        <taxon>Mycobacterium tuberculosis complex</taxon>
    </lineage>
</organism>
<proteinExistence type="inferred from homology"/>
<name>MQO_MYCBO</name>
<evidence type="ECO:0000250" key="1"/>
<evidence type="ECO:0000305" key="2"/>
<dbReference type="EC" id="1.1.5.4"/>
<dbReference type="EMBL" id="LT708304">
    <property type="protein sequence ID" value="SIU01497.1"/>
    <property type="molecule type" value="Genomic_DNA"/>
</dbReference>
<dbReference type="RefSeq" id="NP_856522.1">
    <property type="nucleotide sequence ID" value="NC_002945.3"/>
</dbReference>
<dbReference type="RefSeq" id="WP_003414545.1">
    <property type="nucleotide sequence ID" value="NC_002945.4"/>
</dbReference>
<dbReference type="SMR" id="P65420"/>
<dbReference type="GeneID" id="45426839"/>
<dbReference type="KEGG" id="mbo:BQ2027_MB2877C"/>
<dbReference type="PATRIC" id="fig|233413.5.peg.3155"/>
<dbReference type="UniPathway" id="UPA00223">
    <property type="reaction ID" value="UER01008"/>
</dbReference>
<dbReference type="Proteomes" id="UP000001419">
    <property type="component" value="Chromosome"/>
</dbReference>
<dbReference type="GO" id="GO:0047545">
    <property type="term" value="F:2-hydroxyglutarate dehydrogenase activity"/>
    <property type="evidence" value="ECO:0007669"/>
    <property type="project" value="TreeGrafter"/>
</dbReference>
<dbReference type="GO" id="GO:0008924">
    <property type="term" value="F:L-malate dehydrogenase (quinone) activity"/>
    <property type="evidence" value="ECO:0007669"/>
    <property type="project" value="UniProtKB-UniRule"/>
</dbReference>
<dbReference type="GO" id="GO:0006099">
    <property type="term" value="P:tricarboxylic acid cycle"/>
    <property type="evidence" value="ECO:0007669"/>
    <property type="project" value="UniProtKB-UniRule"/>
</dbReference>
<dbReference type="Gene3D" id="3.30.9.10">
    <property type="entry name" value="D-Amino Acid Oxidase, subunit A, domain 2"/>
    <property type="match status" value="1"/>
</dbReference>
<dbReference type="Gene3D" id="3.50.50.60">
    <property type="entry name" value="FAD/NAD(P)-binding domain"/>
    <property type="match status" value="1"/>
</dbReference>
<dbReference type="HAMAP" id="MF_00212">
    <property type="entry name" value="MQO"/>
    <property type="match status" value="1"/>
</dbReference>
<dbReference type="InterPro" id="IPR036188">
    <property type="entry name" value="FAD/NAD-bd_sf"/>
</dbReference>
<dbReference type="InterPro" id="IPR006231">
    <property type="entry name" value="MQO"/>
</dbReference>
<dbReference type="NCBIfam" id="TIGR01320">
    <property type="entry name" value="mal_quin_oxido"/>
    <property type="match status" value="1"/>
</dbReference>
<dbReference type="NCBIfam" id="NF003606">
    <property type="entry name" value="PRK05257.2-1"/>
    <property type="match status" value="1"/>
</dbReference>
<dbReference type="NCBIfam" id="NF003611">
    <property type="entry name" value="PRK05257.3-2"/>
    <property type="match status" value="1"/>
</dbReference>
<dbReference type="PANTHER" id="PTHR43104">
    <property type="entry name" value="L-2-HYDROXYGLUTARATE DEHYDROGENASE, MITOCHONDRIAL"/>
    <property type="match status" value="1"/>
</dbReference>
<dbReference type="PANTHER" id="PTHR43104:SF2">
    <property type="entry name" value="L-2-HYDROXYGLUTARATE DEHYDROGENASE, MITOCHONDRIAL"/>
    <property type="match status" value="1"/>
</dbReference>
<dbReference type="Pfam" id="PF06039">
    <property type="entry name" value="Mqo"/>
    <property type="match status" value="1"/>
</dbReference>
<dbReference type="SUPFAM" id="SSF51905">
    <property type="entry name" value="FAD/NAD(P)-binding domain"/>
    <property type="match status" value="1"/>
</dbReference>
<feature type="chain" id="PRO_0000128722" description="Probable malate:quinone oxidoreductase">
    <location>
        <begin position="1"/>
        <end position="493"/>
    </location>
</feature>
<accession>P65420</accession>
<accession>A0A1R3Y2J4</accession>
<accession>O05807</accession>
<accession>X2BM23</accession>
<protein>
    <recommendedName>
        <fullName>Probable malate:quinone oxidoreductase</fullName>
        <ecNumber>1.1.5.4</ecNumber>
    </recommendedName>
    <alternativeName>
        <fullName>MQO</fullName>
    </alternativeName>
    <alternativeName>
        <fullName>Malate dehydrogenase [quinone]</fullName>
    </alternativeName>
</protein>
<gene>
    <name type="primary">mqo</name>
    <name type="ordered locus">BQ2027_MB2877C</name>
</gene>